<organism>
    <name type="scientific">Candida albicans (strain SC5314 / ATCC MYA-2876)</name>
    <name type="common">Yeast</name>
    <dbReference type="NCBI Taxonomy" id="237561"/>
    <lineage>
        <taxon>Eukaryota</taxon>
        <taxon>Fungi</taxon>
        <taxon>Dikarya</taxon>
        <taxon>Ascomycota</taxon>
        <taxon>Saccharomycotina</taxon>
        <taxon>Pichiomycetes</taxon>
        <taxon>Debaryomycetaceae</taxon>
        <taxon>Candida/Lodderomyces clade</taxon>
        <taxon>Candida</taxon>
    </lineage>
</organism>
<evidence type="ECO:0000250" key="1"/>
<evidence type="ECO:0000255" key="2"/>
<evidence type="ECO:0000305" key="3"/>
<proteinExistence type="inferred from homology"/>
<comment type="function">
    <text evidence="1">Probable transporter.</text>
</comment>
<comment type="subcellular location">
    <subcellularLocation>
        <location evidence="1">Vacuole membrane</location>
        <topology evidence="1">Multi-pass membrane protein</topology>
    </subcellularLocation>
</comment>
<comment type="similarity">
    <text evidence="3">Belongs to the major facilitator superfamily.</text>
</comment>
<feature type="chain" id="PRO_0000084868" description="Probable transporter MCH1">
    <location>
        <begin position="1"/>
        <end position="436"/>
    </location>
</feature>
<feature type="transmembrane region" description="Helical" evidence="2">
    <location>
        <begin position="27"/>
        <end position="47"/>
    </location>
</feature>
<feature type="transmembrane region" description="Helical" evidence="2">
    <location>
        <begin position="66"/>
        <end position="86"/>
    </location>
</feature>
<feature type="transmembrane region" description="Helical" evidence="2">
    <location>
        <begin position="93"/>
        <end position="113"/>
    </location>
</feature>
<feature type="transmembrane region" description="Helical" evidence="2">
    <location>
        <begin position="119"/>
        <end position="139"/>
    </location>
</feature>
<feature type="transmembrane region" description="Helical" evidence="2">
    <location>
        <begin position="155"/>
        <end position="175"/>
    </location>
</feature>
<feature type="transmembrane region" description="Helical" evidence="2">
    <location>
        <begin position="188"/>
        <end position="208"/>
    </location>
</feature>
<feature type="transmembrane region" description="Helical" evidence="2">
    <location>
        <begin position="249"/>
        <end position="269"/>
    </location>
</feature>
<feature type="transmembrane region" description="Helical" evidence="2">
    <location>
        <begin position="295"/>
        <end position="312"/>
    </location>
</feature>
<feature type="transmembrane region" description="Helical" evidence="2">
    <location>
        <begin position="325"/>
        <end position="345"/>
    </location>
</feature>
<feature type="transmembrane region" description="Helical" evidence="2">
    <location>
        <begin position="347"/>
        <end position="367"/>
    </location>
</feature>
<feature type="transmembrane region" description="Helical" evidence="2">
    <location>
        <begin position="373"/>
        <end position="393"/>
    </location>
</feature>
<feature type="transmembrane region" description="Helical" evidence="2">
    <location>
        <begin position="410"/>
        <end position="430"/>
    </location>
</feature>
<feature type="glycosylation site" description="N-linked (GlcNAc...) asparagine" evidence="2">
    <location>
        <position position="278"/>
    </location>
</feature>
<reference key="1">
    <citation type="journal article" date="2004" name="Proc. Natl. Acad. Sci. U.S.A.">
        <title>The diploid genome sequence of Candida albicans.</title>
        <authorList>
            <person name="Jones T."/>
            <person name="Federspiel N.A."/>
            <person name="Chibana H."/>
            <person name="Dungan J."/>
            <person name="Kalman S."/>
            <person name="Magee B.B."/>
            <person name="Newport G."/>
            <person name="Thorstenson Y.R."/>
            <person name="Agabian N."/>
            <person name="Magee P.T."/>
            <person name="Davis R.W."/>
            <person name="Scherer S."/>
        </authorList>
    </citation>
    <scope>NUCLEOTIDE SEQUENCE [LARGE SCALE GENOMIC DNA]</scope>
    <source>
        <strain>SC5314 / ATCC MYA-2876</strain>
    </source>
</reference>
<reference key="2">
    <citation type="journal article" date="2007" name="Genome Biol.">
        <title>Assembly of the Candida albicans genome into sixteen supercontigs aligned on the eight chromosomes.</title>
        <authorList>
            <person name="van het Hoog M."/>
            <person name="Rast T.J."/>
            <person name="Martchenko M."/>
            <person name="Grindle S."/>
            <person name="Dignard D."/>
            <person name="Hogues H."/>
            <person name="Cuomo C."/>
            <person name="Berriman M."/>
            <person name="Scherer S."/>
            <person name="Magee B.B."/>
            <person name="Whiteway M."/>
            <person name="Chibana H."/>
            <person name="Nantel A."/>
            <person name="Magee P.T."/>
        </authorList>
    </citation>
    <scope>GENOME REANNOTATION</scope>
    <source>
        <strain>SC5314 / ATCC MYA-2876</strain>
    </source>
</reference>
<reference key="3">
    <citation type="journal article" date="2013" name="Genome Biol.">
        <title>Assembly of a phased diploid Candida albicans genome facilitates allele-specific measurements and provides a simple model for repeat and indel structure.</title>
        <authorList>
            <person name="Muzzey D."/>
            <person name="Schwartz K."/>
            <person name="Weissman J.S."/>
            <person name="Sherlock G."/>
        </authorList>
    </citation>
    <scope>NUCLEOTIDE SEQUENCE [LARGE SCALE GENOMIC DNA]</scope>
    <scope>GENOME REANNOTATION</scope>
    <source>
        <strain>SC5314 / ATCC MYA-2876</strain>
    </source>
</reference>
<reference key="4">
    <citation type="journal article" date="2002" name="FEMS Yeast Res.">
        <title>Gluconeogenesis in Candida albicans.</title>
        <authorList>
            <person name="Eschrich D."/>
            <person name="Koetter P."/>
            <person name="Entian K.-D."/>
        </authorList>
    </citation>
    <scope>NUCLEOTIDE SEQUENCE [GENOMIC DNA] OF 1-264</scope>
</reference>
<dbReference type="EMBL" id="CP017625">
    <property type="protein sequence ID" value="AOW28783.1"/>
    <property type="molecule type" value="Genomic_DNA"/>
</dbReference>
<dbReference type="EMBL" id="AF222906">
    <property type="protein sequence ID" value="AAF34694.1"/>
    <property type="molecule type" value="Genomic_DNA"/>
</dbReference>
<dbReference type="RefSeq" id="XP_710936.1">
    <property type="nucleotide sequence ID" value="XM_705844.1"/>
</dbReference>
<dbReference type="SMR" id="Q59MJ2"/>
<dbReference type="FunCoup" id="Q59MJ2">
    <property type="interactions" value="23"/>
</dbReference>
<dbReference type="GlyCosmos" id="Q59MJ2">
    <property type="glycosylation" value="1 site, No reported glycans"/>
</dbReference>
<dbReference type="EnsemblFungi" id="C3_07850W_A-T">
    <property type="protein sequence ID" value="C3_07850W_A-T-p1"/>
    <property type="gene ID" value="C3_07850W_A"/>
</dbReference>
<dbReference type="GeneID" id="3647466"/>
<dbReference type="KEGG" id="cal:CAALFM_C307850WA"/>
<dbReference type="CGD" id="CAL0000193330">
    <property type="gene designation" value="orf19.6180"/>
</dbReference>
<dbReference type="VEuPathDB" id="FungiDB:C3_07850W_A"/>
<dbReference type="eggNOG" id="ENOG502QTNE">
    <property type="taxonomic scope" value="Eukaryota"/>
</dbReference>
<dbReference type="HOGENOM" id="CLU_012596_3_0_1"/>
<dbReference type="InParanoid" id="Q59MJ2"/>
<dbReference type="OMA" id="PTMWWLA"/>
<dbReference type="OrthoDB" id="199930at2759"/>
<dbReference type="Proteomes" id="UP000000559">
    <property type="component" value="Chromosome 3"/>
</dbReference>
<dbReference type="GO" id="GO:0000329">
    <property type="term" value="C:fungal-type vacuole membrane"/>
    <property type="evidence" value="ECO:0000318"/>
    <property type="project" value="GO_Central"/>
</dbReference>
<dbReference type="GO" id="GO:0022857">
    <property type="term" value="F:transmembrane transporter activity"/>
    <property type="evidence" value="ECO:0007669"/>
    <property type="project" value="InterPro"/>
</dbReference>
<dbReference type="CDD" id="cd17354">
    <property type="entry name" value="MFS_Mch1p_like"/>
    <property type="match status" value="1"/>
</dbReference>
<dbReference type="Gene3D" id="1.20.1250.20">
    <property type="entry name" value="MFS general substrate transporter like domains"/>
    <property type="match status" value="1"/>
</dbReference>
<dbReference type="InterPro" id="IPR011701">
    <property type="entry name" value="MFS"/>
</dbReference>
<dbReference type="InterPro" id="IPR036259">
    <property type="entry name" value="MFS_trans_sf"/>
</dbReference>
<dbReference type="PANTHER" id="PTHR21576:SF45">
    <property type="entry name" value="TRANSPORTER MCH1-RELATED"/>
    <property type="match status" value="1"/>
</dbReference>
<dbReference type="PANTHER" id="PTHR21576">
    <property type="entry name" value="UNCHARACTERIZED NODULIN-LIKE PROTEIN"/>
    <property type="match status" value="1"/>
</dbReference>
<dbReference type="Pfam" id="PF07690">
    <property type="entry name" value="MFS_1"/>
    <property type="match status" value="1"/>
</dbReference>
<dbReference type="SUPFAM" id="SSF103473">
    <property type="entry name" value="MFS general substrate transporter"/>
    <property type="match status" value="1"/>
</dbReference>
<accession>Q59MJ2</accession>
<accession>A0A1D8PKX6</accession>
<accession>Q9P8Q3</accession>
<keyword id="KW-0325">Glycoprotein</keyword>
<keyword id="KW-0472">Membrane</keyword>
<keyword id="KW-1185">Reference proteome</keyword>
<keyword id="KW-0812">Transmembrane</keyword>
<keyword id="KW-1133">Transmembrane helix</keyword>
<keyword id="KW-0813">Transport</keyword>
<keyword id="KW-0926">Vacuole</keyword>
<protein>
    <recommendedName>
        <fullName>Probable transporter MCH1</fullName>
    </recommendedName>
</protein>
<gene>
    <name type="primary">MCH1</name>
    <name type="ordered locus">CAALFM_C307850WA</name>
    <name type="ORF">CaO19.6180</name>
</gene>
<sequence length="436" mass="47815">MHKHLHHVSHTIKSYLSTLIALENLKVVAFLISLLSCLVAGSILLFTLYTSSFHEVLGLSYLQINMISSLSALGMYFCLPVLGYLADSYGPALLSLFSIWFFCPSYFVNSYLVSTQSGSVIGFCVCFCFIGLATSSLYFSSLITCARICPDHKGLAISLPITCYGLSALLGAQILKLPYFHRHDVLDLEVVFSFFAWLYLVVGIASFVSSSIVIVESELLFGVTPDEETALLELTPTRSLEPPNHRQRFVSFVKDPSAWILLVSLILNIGPMESYQNNLSSILKHTNGADLPNQVSIMAASSTGARLLLGVLSDYSSKYVCRVWLLVVVIVVGVAGQMSETSAILNGVSYGGMFTIYPTIVASIWGIDIMGSTWGSFMVAPALGSVIFSMFYGRNADSCSDCLSHYFYTTAGAMIVSCIFVLLAWKIWYARGFTRF</sequence>
<name>MCH1_CANAL</name>